<dbReference type="EC" id="6.1.1.15" evidence="1"/>
<dbReference type="EMBL" id="L43967">
    <property type="protein sequence ID" value="AAC71505.1"/>
    <property type="molecule type" value="Genomic_DNA"/>
</dbReference>
<dbReference type="EMBL" id="U02205">
    <property type="protein sequence ID" value="AAD12494.1"/>
    <property type="molecule type" value="Genomic_DNA"/>
</dbReference>
<dbReference type="PIR" id="C64231">
    <property type="entry name" value="C64231"/>
</dbReference>
<dbReference type="RefSeq" id="WP_009885995.1">
    <property type="nucleotide sequence ID" value="NC_000908.2"/>
</dbReference>
<dbReference type="SMR" id="P47525"/>
<dbReference type="STRING" id="243273.MG_283"/>
<dbReference type="GeneID" id="88282444"/>
<dbReference type="KEGG" id="mge:MG_283"/>
<dbReference type="eggNOG" id="COG0441">
    <property type="taxonomic scope" value="Bacteria"/>
</dbReference>
<dbReference type="HOGENOM" id="CLU_001882_4_2_14"/>
<dbReference type="InParanoid" id="P47525"/>
<dbReference type="OrthoDB" id="9809052at2"/>
<dbReference type="BioCyc" id="MGEN243273:G1GJ2-346-MONOMER"/>
<dbReference type="Proteomes" id="UP000000807">
    <property type="component" value="Chromosome"/>
</dbReference>
<dbReference type="GO" id="GO:0017101">
    <property type="term" value="C:aminoacyl-tRNA synthetase multienzyme complex"/>
    <property type="evidence" value="ECO:0000318"/>
    <property type="project" value="GO_Central"/>
</dbReference>
<dbReference type="GO" id="GO:0005737">
    <property type="term" value="C:cytoplasm"/>
    <property type="evidence" value="ECO:0000318"/>
    <property type="project" value="GO_Central"/>
</dbReference>
<dbReference type="GO" id="GO:0005524">
    <property type="term" value="F:ATP binding"/>
    <property type="evidence" value="ECO:0007669"/>
    <property type="project" value="UniProtKB-UniRule"/>
</dbReference>
<dbReference type="GO" id="GO:0004827">
    <property type="term" value="F:proline-tRNA ligase activity"/>
    <property type="evidence" value="ECO:0000318"/>
    <property type="project" value="GO_Central"/>
</dbReference>
<dbReference type="GO" id="GO:0006433">
    <property type="term" value="P:prolyl-tRNA aminoacylation"/>
    <property type="evidence" value="ECO:0000318"/>
    <property type="project" value="GO_Central"/>
</dbReference>
<dbReference type="CDD" id="cd00778">
    <property type="entry name" value="ProRS_core_arch_euk"/>
    <property type="match status" value="1"/>
</dbReference>
<dbReference type="Gene3D" id="3.30.930.10">
    <property type="entry name" value="Bira Bifunctional Protein, Domain 2"/>
    <property type="match status" value="1"/>
</dbReference>
<dbReference type="HAMAP" id="MF_01571">
    <property type="entry name" value="Pro_tRNA_synth_type3"/>
    <property type="match status" value="1"/>
</dbReference>
<dbReference type="InterPro" id="IPR002314">
    <property type="entry name" value="aa-tRNA-synt_IIb"/>
</dbReference>
<dbReference type="InterPro" id="IPR006195">
    <property type="entry name" value="aa-tRNA-synth_II"/>
</dbReference>
<dbReference type="InterPro" id="IPR045864">
    <property type="entry name" value="aa-tRNA-synth_II/BPL/LPL"/>
</dbReference>
<dbReference type="InterPro" id="IPR002316">
    <property type="entry name" value="Pro-tRNA-ligase_IIa"/>
</dbReference>
<dbReference type="InterPro" id="IPR004499">
    <property type="entry name" value="Pro-tRNA-ligase_IIa_arc-type"/>
</dbReference>
<dbReference type="InterPro" id="IPR016061">
    <property type="entry name" value="Pro-tRNA_ligase_II_C"/>
</dbReference>
<dbReference type="InterPro" id="IPR017449">
    <property type="entry name" value="Pro-tRNA_synth_II"/>
</dbReference>
<dbReference type="InterPro" id="IPR033721">
    <property type="entry name" value="ProRS_core_arch_euk"/>
</dbReference>
<dbReference type="NCBIfam" id="TIGR00408">
    <property type="entry name" value="proS_fam_I"/>
    <property type="match status" value="1"/>
</dbReference>
<dbReference type="PANTHER" id="PTHR43382:SF2">
    <property type="entry name" value="BIFUNCTIONAL GLUTAMATE_PROLINE--TRNA LIGASE"/>
    <property type="match status" value="1"/>
</dbReference>
<dbReference type="PANTHER" id="PTHR43382">
    <property type="entry name" value="PROLYL-TRNA SYNTHETASE"/>
    <property type="match status" value="1"/>
</dbReference>
<dbReference type="Pfam" id="PF00587">
    <property type="entry name" value="tRNA-synt_2b"/>
    <property type="match status" value="1"/>
</dbReference>
<dbReference type="PRINTS" id="PR01046">
    <property type="entry name" value="TRNASYNTHPRO"/>
</dbReference>
<dbReference type="SMART" id="SM00946">
    <property type="entry name" value="ProRS-C_1"/>
    <property type="match status" value="1"/>
</dbReference>
<dbReference type="SUPFAM" id="SSF64586">
    <property type="entry name" value="C-terminal domain of ProRS"/>
    <property type="match status" value="1"/>
</dbReference>
<dbReference type="SUPFAM" id="SSF52954">
    <property type="entry name" value="Class II aaRS ABD-related"/>
    <property type="match status" value="1"/>
</dbReference>
<dbReference type="SUPFAM" id="SSF55681">
    <property type="entry name" value="Class II aaRS and biotin synthetases"/>
    <property type="match status" value="1"/>
</dbReference>
<dbReference type="PROSITE" id="PS50862">
    <property type="entry name" value="AA_TRNA_LIGASE_II"/>
    <property type="match status" value="1"/>
</dbReference>
<comment type="function">
    <text evidence="1">Catalyzes the attachment of proline to tRNA(Pro) in a two-step reaction: proline is first activated by ATP to form Pro-AMP and then transferred to the acceptor end of tRNA(Pro).</text>
</comment>
<comment type="catalytic activity">
    <reaction evidence="1">
        <text>tRNA(Pro) + L-proline + ATP = L-prolyl-tRNA(Pro) + AMP + diphosphate</text>
        <dbReference type="Rhea" id="RHEA:14305"/>
        <dbReference type="Rhea" id="RHEA-COMP:9700"/>
        <dbReference type="Rhea" id="RHEA-COMP:9702"/>
        <dbReference type="ChEBI" id="CHEBI:30616"/>
        <dbReference type="ChEBI" id="CHEBI:33019"/>
        <dbReference type="ChEBI" id="CHEBI:60039"/>
        <dbReference type="ChEBI" id="CHEBI:78442"/>
        <dbReference type="ChEBI" id="CHEBI:78532"/>
        <dbReference type="ChEBI" id="CHEBI:456215"/>
        <dbReference type="EC" id="6.1.1.15"/>
    </reaction>
</comment>
<comment type="subunit">
    <text evidence="1">Homodimer.</text>
</comment>
<comment type="subcellular location">
    <subcellularLocation>
        <location evidence="1">Cytoplasm</location>
    </subcellularLocation>
</comment>
<comment type="domain">
    <text evidence="1">Consists of three domains: the N-terminal catalytic domain, the anticodon-binding domain and the C-terminal extension.</text>
</comment>
<comment type="similarity">
    <text evidence="1">Belongs to the class-II aminoacyl-tRNA synthetase family. ProS type 3 subfamily.</text>
</comment>
<reference key="1">
    <citation type="journal article" date="1995" name="Science">
        <title>The minimal gene complement of Mycoplasma genitalium.</title>
        <authorList>
            <person name="Fraser C.M."/>
            <person name="Gocayne J.D."/>
            <person name="White O."/>
            <person name="Adams M.D."/>
            <person name="Clayton R.A."/>
            <person name="Fleischmann R.D."/>
            <person name="Bult C.J."/>
            <person name="Kerlavage A.R."/>
            <person name="Sutton G.G."/>
            <person name="Kelley J.M."/>
            <person name="Fritchman J.L."/>
            <person name="Weidman J.F."/>
            <person name="Small K.V."/>
            <person name="Sandusky M."/>
            <person name="Fuhrmann J.L."/>
            <person name="Nguyen D.T."/>
            <person name="Utterback T.R."/>
            <person name="Saudek D.M."/>
            <person name="Phillips C.A."/>
            <person name="Merrick J.M."/>
            <person name="Tomb J.-F."/>
            <person name="Dougherty B.A."/>
            <person name="Bott K.F."/>
            <person name="Hu P.-C."/>
            <person name="Lucier T.S."/>
            <person name="Peterson S.N."/>
            <person name="Smith H.O."/>
            <person name="Hutchison C.A. III"/>
            <person name="Venter J.C."/>
        </authorList>
    </citation>
    <scope>NUCLEOTIDE SEQUENCE [LARGE SCALE GENOMIC DNA]</scope>
    <source>
        <strain>ATCC 33530 / DSM 19775 / NCTC 10195 / G37</strain>
    </source>
</reference>
<reference key="2">
    <citation type="journal article" date="1993" name="J. Bacteriol.">
        <title>A survey of the Mycoplasma genitalium genome by using random sequencing.</title>
        <authorList>
            <person name="Peterson S.N."/>
            <person name="Hu P.-C."/>
            <person name="Bott K.F."/>
            <person name="Hutchison C.A. III"/>
        </authorList>
    </citation>
    <scope>NUCLEOTIDE SEQUENCE [GENOMIC DNA] OF 281-367</scope>
    <source>
        <strain>ATCC 33530 / DSM 19775 / NCTC 10195 / G37</strain>
    </source>
</reference>
<feature type="chain" id="PRO_0000139333" description="Proline--tRNA ligase">
    <location>
        <begin position="1"/>
        <end position="483"/>
    </location>
</feature>
<feature type="sequence conflict" description="In Ref. 2." evidence="2" ref="2">
    <original>I</original>
    <variation>Y</variation>
    <location>
        <position position="367"/>
    </location>
</feature>
<accession>P47525</accession>
<accession>Q49322</accession>
<proteinExistence type="inferred from homology"/>
<name>SYP_MYCGE</name>
<organism>
    <name type="scientific">Mycoplasma genitalium (strain ATCC 33530 / DSM 19775 / NCTC 10195 / G37)</name>
    <name type="common">Mycoplasmoides genitalium</name>
    <dbReference type="NCBI Taxonomy" id="243273"/>
    <lineage>
        <taxon>Bacteria</taxon>
        <taxon>Bacillati</taxon>
        <taxon>Mycoplasmatota</taxon>
        <taxon>Mycoplasmoidales</taxon>
        <taxon>Mycoplasmoidaceae</taxon>
        <taxon>Mycoplasmoides</taxon>
    </lineage>
</organism>
<gene>
    <name evidence="1" type="primary">proS</name>
    <name type="ordered locus">MG283</name>
</gene>
<protein>
    <recommendedName>
        <fullName evidence="1">Proline--tRNA ligase</fullName>
        <ecNumber evidence="1">6.1.1.15</ecNumber>
    </recommendedName>
    <alternativeName>
        <fullName evidence="1">Prolyl-tRNA synthetase</fullName>
        <shortName evidence="1">ProRS</shortName>
    </alternativeName>
</protein>
<sequence length="483" mass="55869">MTKKTQDLTSWYDQLLVKAKLICHGEVKGTVCFLNNSWGLWMEIQQLYNDAIANKNQLSAIALTKFQPTTSFCYQVFQVQLPTLSFYSEYQKEKTHIKGFNPELFLINQVGQKQLNDPLVLRPTSEIAFCNLWKKQELSYHDLPLIYNQWTQVFRAEKNTRPFLRNSEFYWQETHGLFVDQSQSEQAAISFWNLYQDLIINKLCIPAFVGLKSESEKFAGAKNTWTIEAIMPDGQSLQCATSHDLGDTFTKSFTISYQSKTNQKMTPSSFSCGMSTRILGAIFLTHSDDYGLVLPWYLASKQVKLYLFDKNNNPKTRALAFLVKDFLEKLKIRFSFIEINNQLGKQLLKGEIEGIPLQMIVDNEKTINIFNRLTRLKTSLTFANLQTEFVNLVNNYHTEMYRKANDLVEQKLARVQTLKEIEQAFKNKKAVLCTVKLTGELEQHLKTKYQVSVRCVFKKSDVTQNCPFTNQPCFDSVLIARAY</sequence>
<evidence type="ECO:0000255" key="1">
    <source>
        <dbReference type="HAMAP-Rule" id="MF_01571"/>
    </source>
</evidence>
<evidence type="ECO:0000305" key="2"/>
<keyword id="KW-0030">Aminoacyl-tRNA synthetase</keyword>
<keyword id="KW-0067">ATP-binding</keyword>
<keyword id="KW-0963">Cytoplasm</keyword>
<keyword id="KW-0436">Ligase</keyword>
<keyword id="KW-0547">Nucleotide-binding</keyword>
<keyword id="KW-0648">Protein biosynthesis</keyword>
<keyword id="KW-1185">Reference proteome</keyword>